<comment type="function">
    <text evidence="1">Catalyzes the decarboxylation of orotidine 5'-monophosphate (OMP) to uridine 5'-monophosphate (UMP).</text>
</comment>
<comment type="catalytic activity">
    <reaction evidence="1">
        <text>orotidine 5'-phosphate + H(+) = UMP + CO2</text>
        <dbReference type="Rhea" id="RHEA:11596"/>
        <dbReference type="ChEBI" id="CHEBI:15378"/>
        <dbReference type="ChEBI" id="CHEBI:16526"/>
        <dbReference type="ChEBI" id="CHEBI:57538"/>
        <dbReference type="ChEBI" id="CHEBI:57865"/>
        <dbReference type="EC" id="4.1.1.23"/>
    </reaction>
</comment>
<comment type="pathway">
    <text evidence="1">Pyrimidine metabolism; UMP biosynthesis via de novo pathway; UMP from orotate: step 2/2.</text>
</comment>
<comment type="subunit">
    <text evidence="1">Homodimer.</text>
</comment>
<comment type="similarity">
    <text evidence="1">Belongs to the OMP decarboxylase family. Type 1 subfamily.</text>
</comment>
<reference key="1">
    <citation type="journal article" date="2002" name="Proc. Natl. Acad. Sci. U.S.A.">
        <title>Genome sequence of Streptococcus mutans UA159, a cariogenic dental pathogen.</title>
        <authorList>
            <person name="Ajdic D.J."/>
            <person name="McShan W.M."/>
            <person name="McLaughlin R.E."/>
            <person name="Savic G."/>
            <person name="Chang J."/>
            <person name="Carson M.B."/>
            <person name="Primeaux C."/>
            <person name="Tian R."/>
            <person name="Kenton S."/>
            <person name="Jia H.G."/>
            <person name="Lin S.P."/>
            <person name="Qian Y."/>
            <person name="Li S."/>
            <person name="Zhu H."/>
            <person name="Najar F.Z."/>
            <person name="Lai H."/>
            <person name="White J."/>
            <person name="Roe B.A."/>
            <person name="Ferretti J.J."/>
        </authorList>
    </citation>
    <scope>NUCLEOTIDE SEQUENCE [LARGE SCALE GENOMIC DNA]</scope>
    <source>
        <strain>ATCC 700610 / UA159</strain>
    </source>
</reference>
<evidence type="ECO:0000255" key="1">
    <source>
        <dbReference type="HAMAP-Rule" id="MF_01200"/>
    </source>
</evidence>
<name>PYRF_STRMU</name>
<sequence length="230" mass="24916">MREPRPLIALDFPSFDDVKSFLAQFPPEEKLYVKIGMELYYAVGPEIVRYVKGLGHSVFLDLKLHDIPNTVKSAMKVLSDLGVDMTNVHAAGGVEMMKAAREGLGKGPKLIAVTQLTSTSEEQMHDFQNIQTSLAESVVHYAKKTAEAGLDGVVCSAHEVEAIKSATSNDFVCLTPGIRPAGSAIGDQKRIMTPADARTIGSDYIVLGRPITRAEDPIAAYQAIKAEWNG</sequence>
<protein>
    <recommendedName>
        <fullName evidence="1">Orotidine 5'-phosphate decarboxylase</fullName>
        <ecNumber evidence="1">4.1.1.23</ecNumber>
    </recommendedName>
    <alternativeName>
        <fullName evidence="1">OMP decarboxylase</fullName>
        <shortName evidence="1">OMPDCase</shortName>
        <shortName evidence="1">OMPdecase</shortName>
    </alternativeName>
</protein>
<keyword id="KW-0210">Decarboxylase</keyword>
<keyword id="KW-0456">Lyase</keyword>
<keyword id="KW-0665">Pyrimidine biosynthesis</keyword>
<keyword id="KW-1185">Reference proteome</keyword>
<dbReference type="EC" id="4.1.1.23" evidence="1"/>
<dbReference type="EMBL" id="AE014133">
    <property type="protein sequence ID" value="AAN58907.1"/>
    <property type="molecule type" value="Genomic_DNA"/>
</dbReference>
<dbReference type="RefSeq" id="NP_721601.1">
    <property type="nucleotide sequence ID" value="NC_004350.2"/>
</dbReference>
<dbReference type="RefSeq" id="WP_002263220.1">
    <property type="nucleotide sequence ID" value="NC_004350.2"/>
</dbReference>
<dbReference type="SMR" id="Q8DTV1"/>
<dbReference type="STRING" id="210007.SMU_1222"/>
<dbReference type="KEGG" id="smu:SMU_1222"/>
<dbReference type="PATRIC" id="fig|210007.7.peg.1095"/>
<dbReference type="eggNOG" id="COG0284">
    <property type="taxonomic scope" value="Bacteria"/>
</dbReference>
<dbReference type="HOGENOM" id="CLU_067069_1_1_9"/>
<dbReference type="OrthoDB" id="9806203at2"/>
<dbReference type="PhylomeDB" id="Q8DTV1"/>
<dbReference type="UniPathway" id="UPA00070">
    <property type="reaction ID" value="UER00120"/>
</dbReference>
<dbReference type="Proteomes" id="UP000002512">
    <property type="component" value="Chromosome"/>
</dbReference>
<dbReference type="GO" id="GO:0005829">
    <property type="term" value="C:cytosol"/>
    <property type="evidence" value="ECO:0007669"/>
    <property type="project" value="TreeGrafter"/>
</dbReference>
<dbReference type="GO" id="GO:0004590">
    <property type="term" value="F:orotidine-5'-phosphate decarboxylase activity"/>
    <property type="evidence" value="ECO:0007669"/>
    <property type="project" value="UniProtKB-UniRule"/>
</dbReference>
<dbReference type="GO" id="GO:0006207">
    <property type="term" value="P:'de novo' pyrimidine nucleobase biosynthetic process"/>
    <property type="evidence" value="ECO:0007669"/>
    <property type="project" value="InterPro"/>
</dbReference>
<dbReference type="GO" id="GO:0044205">
    <property type="term" value="P:'de novo' UMP biosynthetic process"/>
    <property type="evidence" value="ECO:0007669"/>
    <property type="project" value="UniProtKB-UniRule"/>
</dbReference>
<dbReference type="CDD" id="cd04725">
    <property type="entry name" value="OMP_decarboxylase_like"/>
    <property type="match status" value="1"/>
</dbReference>
<dbReference type="FunFam" id="3.20.20.70:FF:000015">
    <property type="entry name" value="Orotidine 5'-phosphate decarboxylase"/>
    <property type="match status" value="1"/>
</dbReference>
<dbReference type="Gene3D" id="3.20.20.70">
    <property type="entry name" value="Aldolase class I"/>
    <property type="match status" value="1"/>
</dbReference>
<dbReference type="HAMAP" id="MF_01200_B">
    <property type="entry name" value="OMPdecase_type1_B"/>
    <property type="match status" value="1"/>
</dbReference>
<dbReference type="InterPro" id="IPR013785">
    <property type="entry name" value="Aldolase_TIM"/>
</dbReference>
<dbReference type="InterPro" id="IPR014732">
    <property type="entry name" value="OMPdecase"/>
</dbReference>
<dbReference type="InterPro" id="IPR018089">
    <property type="entry name" value="OMPdecase_AS"/>
</dbReference>
<dbReference type="InterPro" id="IPR047596">
    <property type="entry name" value="OMPdecase_bac"/>
</dbReference>
<dbReference type="InterPro" id="IPR001754">
    <property type="entry name" value="OMPdeCOase_dom"/>
</dbReference>
<dbReference type="InterPro" id="IPR011060">
    <property type="entry name" value="RibuloseP-bd_barrel"/>
</dbReference>
<dbReference type="NCBIfam" id="NF001273">
    <property type="entry name" value="PRK00230.1"/>
    <property type="match status" value="1"/>
</dbReference>
<dbReference type="NCBIfam" id="TIGR01740">
    <property type="entry name" value="pyrF"/>
    <property type="match status" value="1"/>
</dbReference>
<dbReference type="PANTHER" id="PTHR32119">
    <property type="entry name" value="OROTIDINE 5'-PHOSPHATE DECARBOXYLASE"/>
    <property type="match status" value="1"/>
</dbReference>
<dbReference type="PANTHER" id="PTHR32119:SF2">
    <property type="entry name" value="OROTIDINE 5'-PHOSPHATE DECARBOXYLASE"/>
    <property type="match status" value="1"/>
</dbReference>
<dbReference type="Pfam" id="PF00215">
    <property type="entry name" value="OMPdecase"/>
    <property type="match status" value="1"/>
</dbReference>
<dbReference type="SMART" id="SM00934">
    <property type="entry name" value="OMPdecase"/>
    <property type="match status" value="1"/>
</dbReference>
<dbReference type="SUPFAM" id="SSF51366">
    <property type="entry name" value="Ribulose-phoshate binding barrel"/>
    <property type="match status" value="1"/>
</dbReference>
<dbReference type="PROSITE" id="PS00156">
    <property type="entry name" value="OMPDECASE"/>
    <property type="match status" value="1"/>
</dbReference>
<feature type="chain" id="PRO_0000134586" description="Orotidine 5'-phosphate decarboxylase">
    <location>
        <begin position="1"/>
        <end position="230"/>
    </location>
</feature>
<feature type="active site" description="Proton donor" evidence="1">
    <location>
        <position position="63"/>
    </location>
</feature>
<feature type="binding site" evidence="1">
    <location>
        <position position="11"/>
    </location>
    <ligand>
        <name>substrate</name>
    </ligand>
</feature>
<feature type="binding site" evidence="1">
    <location>
        <position position="34"/>
    </location>
    <ligand>
        <name>substrate</name>
    </ligand>
</feature>
<feature type="binding site" evidence="1">
    <location>
        <begin position="61"/>
        <end position="70"/>
    </location>
    <ligand>
        <name>substrate</name>
    </ligand>
</feature>
<feature type="binding site" evidence="1">
    <location>
        <position position="117"/>
    </location>
    <ligand>
        <name>substrate</name>
    </ligand>
</feature>
<feature type="binding site" evidence="1">
    <location>
        <position position="179"/>
    </location>
    <ligand>
        <name>substrate</name>
    </ligand>
</feature>
<feature type="binding site" evidence="1">
    <location>
        <position position="188"/>
    </location>
    <ligand>
        <name>substrate</name>
    </ligand>
</feature>
<feature type="binding site" evidence="1">
    <location>
        <position position="208"/>
    </location>
    <ligand>
        <name>substrate</name>
    </ligand>
</feature>
<feature type="binding site" evidence="1">
    <location>
        <position position="209"/>
    </location>
    <ligand>
        <name>substrate</name>
    </ligand>
</feature>
<accession>Q8DTV1</accession>
<gene>
    <name evidence="1" type="primary">pyrF</name>
    <name type="ordered locus">SMU_1222</name>
</gene>
<proteinExistence type="inferred from homology"/>
<organism>
    <name type="scientific">Streptococcus mutans serotype c (strain ATCC 700610 / UA159)</name>
    <dbReference type="NCBI Taxonomy" id="210007"/>
    <lineage>
        <taxon>Bacteria</taxon>
        <taxon>Bacillati</taxon>
        <taxon>Bacillota</taxon>
        <taxon>Bacilli</taxon>
        <taxon>Lactobacillales</taxon>
        <taxon>Streptococcaceae</taxon>
        <taxon>Streptococcus</taxon>
    </lineage>
</organism>